<organism>
    <name type="scientific">Actinobacillus pleuropneumoniae serotype 3 (strain JL03)</name>
    <dbReference type="NCBI Taxonomy" id="434271"/>
    <lineage>
        <taxon>Bacteria</taxon>
        <taxon>Pseudomonadati</taxon>
        <taxon>Pseudomonadota</taxon>
        <taxon>Gammaproteobacteria</taxon>
        <taxon>Pasteurellales</taxon>
        <taxon>Pasteurellaceae</taxon>
        <taxon>Actinobacillus</taxon>
    </lineage>
</organism>
<reference key="1">
    <citation type="journal article" date="2008" name="PLoS ONE">
        <title>Genome biology of Actinobacillus pleuropneumoniae JL03, an isolate of serotype 3 prevalent in China.</title>
        <authorList>
            <person name="Xu Z."/>
            <person name="Zhou Y."/>
            <person name="Li L."/>
            <person name="Zhou R."/>
            <person name="Xiao S."/>
            <person name="Wan Y."/>
            <person name="Zhang S."/>
            <person name="Wang K."/>
            <person name="Li W."/>
            <person name="Li L."/>
            <person name="Jin H."/>
            <person name="Kang M."/>
            <person name="Dalai B."/>
            <person name="Li T."/>
            <person name="Liu L."/>
            <person name="Cheng Y."/>
            <person name="Zhang L."/>
            <person name="Xu T."/>
            <person name="Zheng H."/>
            <person name="Pu S."/>
            <person name="Wang B."/>
            <person name="Gu W."/>
            <person name="Zhang X.L."/>
            <person name="Zhu G.-F."/>
            <person name="Wang S."/>
            <person name="Zhao G.-P."/>
            <person name="Chen H."/>
        </authorList>
    </citation>
    <scope>NUCLEOTIDE SEQUENCE [LARGE SCALE GENOMIC DNA]</scope>
    <source>
        <strain>JL03</strain>
    </source>
</reference>
<protein>
    <recommendedName>
        <fullName evidence="1">Na(+)/H(+) antiporter NhaB</fullName>
    </recommendedName>
    <alternativeName>
        <fullName evidence="1">Sodium/proton antiporter NhaB</fullName>
    </alternativeName>
</protein>
<gene>
    <name evidence="1" type="primary">nhaB</name>
    <name type="ordered locus">APJL_0337</name>
</gene>
<name>NHAB_ACTPJ</name>
<accession>B0BT71</accession>
<feature type="chain" id="PRO_0000333079" description="Na(+)/H(+) antiporter NhaB">
    <location>
        <begin position="1"/>
        <end position="513"/>
    </location>
</feature>
<feature type="transmembrane region" description="Helical" evidence="1">
    <location>
        <begin position="21"/>
        <end position="41"/>
    </location>
</feature>
<feature type="transmembrane region" description="Helical" evidence="1">
    <location>
        <begin position="64"/>
        <end position="84"/>
    </location>
</feature>
<feature type="transmembrane region" description="Helical" evidence="1">
    <location>
        <begin position="88"/>
        <end position="108"/>
    </location>
</feature>
<feature type="transmembrane region" description="Helical" evidence="1">
    <location>
        <begin position="119"/>
        <end position="139"/>
    </location>
</feature>
<feature type="transmembrane region" description="Helical" evidence="1">
    <location>
        <begin position="143"/>
        <end position="163"/>
    </location>
</feature>
<feature type="transmembrane region" description="Helical" evidence="1">
    <location>
        <begin position="202"/>
        <end position="222"/>
    </location>
</feature>
<feature type="transmembrane region" description="Helical" evidence="1">
    <location>
        <begin position="243"/>
        <end position="263"/>
    </location>
</feature>
<feature type="transmembrane region" description="Helical" evidence="1">
    <location>
        <begin position="299"/>
        <end position="318"/>
    </location>
</feature>
<feature type="transmembrane region" description="Helical" evidence="1">
    <location>
        <begin position="322"/>
        <end position="344"/>
    </location>
</feature>
<feature type="transmembrane region" description="Helical" evidence="1">
    <location>
        <begin position="350"/>
        <end position="370"/>
    </location>
</feature>
<feature type="transmembrane region" description="Helical" evidence="1">
    <location>
        <begin position="389"/>
        <end position="409"/>
    </location>
</feature>
<feature type="transmembrane region" description="Helical" evidence="1">
    <location>
        <begin position="477"/>
        <end position="497"/>
    </location>
</feature>
<evidence type="ECO:0000255" key="1">
    <source>
        <dbReference type="HAMAP-Rule" id="MF_01599"/>
    </source>
</evidence>
<comment type="function">
    <text evidence="1">Na(+)/H(+) antiporter that extrudes sodium in exchange for external protons.</text>
</comment>
<comment type="catalytic activity">
    <reaction evidence="1">
        <text>2 Na(+)(in) + 3 H(+)(out) = 2 Na(+)(out) + 3 H(+)(in)</text>
        <dbReference type="Rhea" id="RHEA:29247"/>
        <dbReference type="ChEBI" id="CHEBI:15378"/>
        <dbReference type="ChEBI" id="CHEBI:29101"/>
    </reaction>
    <physiologicalReaction direction="left-to-right" evidence="1">
        <dbReference type="Rhea" id="RHEA:29248"/>
    </physiologicalReaction>
</comment>
<comment type="subcellular location">
    <subcellularLocation>
        <location evidence="1">Cell inner membrane</location>
        <topology evidence="1">Multi-pass membrane protein</topology>
    </subcellularLocation>
</comment>
<comment type="similarity">
    <text evidence="1">Belongs to the NhaB Na(+)/H(+) (TC 2.A.34) antiporter family.</text>
</comment>
<sequence>MDSSNAIFKSFLGKAPEWYKICIIAFLVINPLIYFFISPFVAGWALVAEFIFTLSMALKCYPLQPGGLLAIEAVFIGMTSAHHVKEEIMANFEVILLLMFMVAGIYFMKQLLLYVFTKLLIVIHSKKILSLAFCLSATFLSAFLDALTVIAVIISVGTGFYGVYHKVASGNSFEDSTDISNDEKIITNKEILEQFRAFLRSLLMHAAVGSALGGVMTMVGEPQNLIIAGQAEWGFVEFLLRVLPVSLPVLICGVITCLLLEHFKIFGYGARLPRRVWGVLARYNLLKEQRMTQQDRVKMGIQALAGIWLVVGLALHLADVGIIGLTIIIICTAFCGITDEHAIGRSFQEPMPFTALIVVFFTVVAVIVDLKLFEPIISYVLSADPHSQLALFYVFNGLLSMISDNVFVGTVYINEAKTALESAIISREQFDLIAVAINTGTNLPSVATPNGQAAFLFLLTSPFAPLIRLSYGKMLYMALPYTIVLSIIGFLSLEFLLPPLTELMSNWGWIITR</sequence>
<proteinExistence type="inferred from homology"/>
<dbReference type="EMBL" id="CP000687">
    <property type="protein sequence ID" value="ABY68928.1"/>
    <property type="molecule type" value="Genomic_DNA"/>
</dbReference>
<dbReference type="RefSeq" id="WP_005600421.1">
    <property type="nucleotide sequence ID" value="NC_010278.1"/>
</dbReference>
<dbReference type="SMR" id="B0BT71"/>
<dbReference type="KEGG" id="apj:APJL_0337"/>
<dbReference type="HOGENOM" id="CLU_041110_0_0_6"/>
<dbReference type="Proteomes" id="UP000008547">
    <property type="component" value="Chromosome"/>
</dbReference>
<dbReference type="GO" id="GO:0005886">
    <property type="term" value="C:plasma membrane"/>
    <property type="evidence" value="ECO:0007669"/>
    <property type="project" value="UniProtKB-SubCell"/>
</dbReference>
<dbReference type="GO" id="GO:0015385">
    <property type="term" value="F:sodium:proton antiporter activity"/>
    <property type="evidence" value="ECO:0007669"/>
    <property type="project" value="InterPro"/>
</dbReference>
<dbReference type="HAMAP" id="MF_01599">
    <property type="entry name" value="NhaB"/>
    <property type="match status" value="1"/>
</dbReference>
<dbReference type="InterPro" id="IPR004671">
    <property type="entry name" value="Na+/H+_antiporter_NhaB"/>
</dbReference>
<dbReference type="NCBIfam" id="TIGR00774">
    <property type="entry name" value="NhaB"/>
    <property type="match status" value="1"/>
</dbReference>
<dbReference type="NCBIfam" id="NF007093">
    <property type="entry name" value="PRK09547.1"/>
    <property type="match status" value="1"/>
</dbReference>
<dbReference type="PANTHER" id="PTHR43302:SF1">
    <property type="entry name" value="NA(+)_H(+) ANTIPORTER NHAB"/>
    <property type="match status" value="1"/>
</dbReference>
<dbReference type="PANTHER" id="PTHR43302">
    <property type="entry name" value="TRANSPORTER ARSB-RELATED"/>
    <property type="match status" value="1"/>
</dbReference>
<dbReference type="Pfam" id="PF06450">
    <property type="entry name" value="NhaB"/>
    <property type="match status" value="1"/>
</dbReference>
<keyword id="KW-0050">Antiport</keyword>
<keyword id="KW-0997">Cell inner membrane</keyword>
<keyword id="KW-1003">Cell membrane</keyword>
<keyword id="KW-0406">Ion transport</keyword>
<keyword id="KW-0472">Membrane</keyword>
<keyword id="KW-0915">Sodium</keyword>
<keyword id="KW-0739">Sodium transport</keyword>
<keyword id="KW-0812">Transmembrane</keyword>
<keyword id="KW-1133">Transmembrane helix</keyword>
<keyword id="KW-0813">Transport</keyword>